<name>RL16_BACCR</name>
<accession>Q81J35</accession>
<gene>
    <name evidence="1" type="primary">rplP</name>
    <name type="ordered locus">BC_0138</name>
</gene>
<comment type="function">
    <text evidence="1">Binds 23S rRNA and is also seen to make contacts with the A and possibly P site tRNAs.</text>
</comment>
<comment type="subunit">
    <text evidence="1">Part of the 50S ribosomal subunit.</text>
</comment>
<comment type="similarity">
    <text evidence="1">Belongs to the universal ribosomal protein uL16 family.</text>
</comment>
<reference key="1">
    <citation type="journal article" date="2003" name="Nature">
        <title>Genome sequence of Bacillus cereus and comparative analysis with Bacillus anthracis.</title>
        <authorList>
            <person name="Ivanova N."/>
            <person name="Sorokin A."/>
            <person name="Anderson I."/>
            <person name="Galleron N."/>
            <person name="Candelon B."/>
            <person name="Kapatral V."/>
            <person name="Bhattacharyya A."/>
            <person name="Reznik G."/>
            <person name="Mikhailova N."/>
            <person name="Lapidus A."/>
            <person name="Chu L."/>
            <person name="Mazur M."/>
            <person name="Goltsman E."/>
            <person name="Larsen N."/>
            <person name="D'Souza M."/>
            <person name="Walunas T."/>
            <person name="Grechkin Y."/>
            <person name="Pusch G."/>
            <person name="Haselkorn R."/>
            <person name="Fonstein M."/>
            <person name="Ehrlich S.D."/>
            <person name="Overbeek R."/>
            <person name="Kyrpides N.C."/>
        </authorList>
    </citation>
    <scope>NUCLEOTIDE SEQUENCE [LARGE SCALE GENOMIC DNA]</scope>
    <source>
        <strain>ATCC 14579 / DSM 31 / CCUG 7414 / JCM 2152 / NBRC 15305 / NCIMB 9373 / NCTC 2599 / NRRL B-3711</strain>
    </source>
</reference>
<keyword id="KW-1185">Reference proteome</keyword>
<keyword id="KW-0687">Ribonucleoprotein</keyword>
<keyword id="KW-0689">Ribosomal protein</keyword>
<keyword id="KW-0694">RNA-binding</keyword>
<keyword id="KW-0699">rRNA-binding</keyword>
<keyword id="KW-0820">tRNA-binding</keyword>
<protein>
    <recommendedName>
        <fullName evidence="1">Large ribosomal subunit protein uL16</fullName>
    </recommendedName>
    <alternativeName>
        <fullName evidence="2">50S ribosomal protein L16</fullName>
    </alternativeName>
</protein>
<dbReference type="EMBL" id="AE016877">
    <property type="protein sequence ID" value="AAP07219.1"/>
    <property type="molecule type" value="Genomic_DNA"/>
</dbReference>
<dbReference type="RefSeq" id="NP_830018.1">
    <property type="nucleotide sequence ID" value="NC_004722.1"/>
</dbReference>
<dbReference type="RefSeq" id="WP_000928969.1">
    <property type="nucleotide sequence ID" value="NZ_CP138336.1"/>
</dbReference>
<dbReference type="SMR" id="Q81J35"/>
<dbReference type="STRING" id="226900.BC_0138"/>
<dbReference type="MetOSite" id="Q81J35"/>
<dbReference type="GeneID" id="93010936"/>
<dbReference type="KEGG" id="bce:BC0138"/>
<dbReference type="PATRIC" id="fig|226900.8.peg.139"/>
<dbReference type="HOGENOM" id="CLU_078858_2_1_9"/>
<dbReference type="OrthoDB" id="9802589at2"/>
<dbReference type="PRO" id="PR:Q81J35"/>
<dbReference type="Proteomes" id="UP000001417">
    <property type="component" value="Chromosome"/>
</dbReference>
<dbReference type="GO" id="GO:0022625">
    <property type="term" value="C:cytosolic large ribosomal subunit"/>
    <property type="evidence" value="ECO:0000318"/>
    <property type="project" value="GO_Central"/>
</dbReference>
<dbReference type="GO" id="GO:0019843">
    <property type="term" value="F:rRNA binding"/>
    <property type="evidence" value="ECO:0000318"/>
    <property type="project" value="GO_Central"/>
</dbReference>
<dbReference type="GO" id="GO:0003735">
    <property type="term" value="F:structural constituent of ribosome"/>
    <property type="evidence" value="ECO:0000318"/>
    <property type="project" value="GO_Central"/>
</dbReference>
<dbReference type="GO" id="GO:0000049">
    <property type="term" value="F:tRNA binding"/>
    <property type="evidence" value="ECO:0007669"/>
    <property type="project" value="UniProtKB-KW"/>
</dbReference>
<dbReference type="GO" id="GO:0006412">
    <property type="term" value="P:translation"/>
    <property type="evidence" value="ECO:0007669"/>
    <property type="project" value="UniProtKB-UniRule"/>
</dbReference>
<dbReference type="CDD" id="cd01433">
    <property type="entry name" value="Ribosomal_L16_L10e"/>
    <property type="match status" value="1"/>
</dbReference>
<dbReference type="FunFam" id="3.90.1170.10:FF:000001">
    <property type="entry name" value="50S ribosomal protein L16"/>
    <property type="match status" value="1"/>
</dbReference>
<dbReference type="Gene3D" id="3.90.1170.10">
    <property type="entry name" value="Ribosomal protein L10e/L16"/>
    <property type="match status" value="1"/>
</dbReference>
<dbReference type="HAMAP" id="MF_01342">
    <property type="entry name" value="Ribosomal_uL16"/>
    <property type="match status" value="1"/>
</dbReference>
<dbReference type="InterPro" id="IPR047873">
    <property type="entry name" value="Ribosomal_uL16"/>
</dbReference>
<dbReference type="InterPro" id="IPR000114">
    <property type="entry name" value="Ribosomal_uL16_bact-type"/>
</dbReference>
<dbReference type="InterPro" id="IPR020798">
    <property type="entry name" value="Ribosomal_uL16_CS"/>
</dbReference>
<dbReference type="InterPro" id="IPR016180">
    <property type="entry name" value="Ribosomal_uL16_dom"/>
</dbReference>
<dbReference type="InterPro" id="IPR036920">
    <property type="entry name" value="Ribosomal_uL16_sf"/>
</dbReference>
<dbReference type="NCBIfam" id="TIGR01164">
    <property type="entry name" value="rplP_bact"/>
    <property type="match status" value="1"/>
</dbReference>
<dbReference type="PANTHER" id="PTHR12220">
    <property type="entry name" value="50S/60S RIBOSOMAL PROTEIN L16"/>
    <property type="match status" value="1"/>
</dbReference>
<dbReference type="PANTHER" id="PTHR12220:SF13">
    <property type="entry name" value="LARGE RIBOSOMAL SUBUNIT PROTEIN UL16M"/>
    <property type="match status" value="1"/>
</dbReference>
<dbReference type="Pfam" id="PF00252">
    <property type="entry name" value="Ribosomal_L16"/>
    <property type="match status" value="1"/>
</dbReference>
<dbReference type="PRINTS" id="PR00060">
    <property type="entry name" value="RIBOSOMALL16"/>
</dbReference>
<dbReference type="SUPFAM" id="SSF54686">
    <property type="entry name" value="Ribosomal protein L16p/L10e"/>
    <property type="match status" value="1"/>
</dbReference>
<dbReference type="PROSITE" id="PS00586">
    <property type="entry name" value="RIBOSOMAL_L16_1"/>
    <property type="match status" value="1"/>
</dbReference>
<dbReference type="PROSITE" id="PS00701">
    <property type="entry name" value="RIBOSOMAL_L16_2"/>
    <property type="match status" value="1"/>
</dbReference>
<feature type="chain" id="PRO_0000062037" description="Large ribosomal subunit protein uL16">
    <location>
        <begin position="1"/>
        <end position="144"/>
    </location>
</feature>
<proteinExistence type="inferred from homology"/>
<evidence type="ECO:0000255" key="1">
    <source>
        <dbReference type="HAMAP-Rule" id="MF_01342"/>
    </source>
</evidence>
<evidence type="ECO:0000305" key="2"/>
<organism>
    <name type="scientific">Bacillus cereus (strain ATCC 14579 / DSM 31 / CCUG 7414 / JCM 2152 / NBRC 15305 / NCIMB 9373 / NCTC 2599 / NRRL B-3711)</name>
    <dbReference type="NCBI Taxonomy" id="226900"/>
    <lineage>
        <taxon>Bacteria</taxon>
        <taxon>Bacillati</taxon>
        <taxon>Bacillota</taxon>
        <taxon>Bacilli</taxon>
        <taxon>Bacillales</taxon>
        <taxon>Bacillaceae</taxon>
        <taxon>Bacillus</taxon>
        <taxon>Bacillus cereus group</taxon>
    </lineage>
</organism>
<sequence>MLMPKRVKYRREHRGKMRGRAKGGTEIAFGEFGLQAQAASWITNRQIEAARRAMTRYMKRGGKVWIKIFPSKPYTAKPLEVRMGSGKGAPEGWVAVVKPGKIMFEIAGVSEEVAREALRLAAHKLPVKCKFVKREENGGESNEN</sequence>